<comment type="function">
    <text evidence="1">Binds the lower part of the 30S subunit head. Binds mRNA in the 70S ribosome, positioning it for translation.</text>
</comment>
<comment type="subunit">
    <text evidence="1 2">Part of the 30S ribosomal subunit (PubMed:30126986). Forms a tight complex with proteins S10 and S14 (By similarity).</text>
</comment>
<comment type="similarity">
    <text evidence="1">Belongs to the universal ribosomal protein uS3 family.</text>
</comment>
<accession>P21465</accession>
<sequence length="218" mass="24323">MGQKVNPVGLRIGVIRDWESKWYAGKDYADFLHEDLKIREYISKRLSDASVSKVEIERAANRVNITIHTAKPGMVIGKGGSEVEALRKALNSLTGKRVHINILEIKRADLDAQLVADNIARQLENRVSFRRAQKQQIQRTMRAGAQGVKTMVSGRLGGADIARSEYYSEGTVPLHTLRADIDYATSEADTTYGKLGVKVWIYRGEVLPTKKKNEEGGK</sequence>
<organism>
    <name type="scientific">Bacillus subtilis (strain 168)</name>
    <dbReference type="NCBI Taxonomy" id="224308"/>
    <lineage>
        <taxon>Bacteria</taxon>
        <taxon>Bacillati</taxon>
        <taxon>Bacillota</taxon>
        <taxon>Bacilli</taxon>
        <taxon>Bacillales</taxon>
        <taxon>Bacillaceae</taxon>
        <taxon>Bacillus</taxon>
    </lineage>
</organism>
<protein>
    <recommendedName>
        <fullName evidence="1">Small ribosomal subunit protein uS3</fullName>
    </recommendedName>
    <alternativeName>
        <fullName evidence="4">30S ribosomal protein S3</fullName>
        <shortName>BS3</shortName>
    </alternativeName>
    <alternativeName>
        <fullName>BS2</fullName>
    </alternativeName>
</protein>
<proteinExistence type="evidence at protein level"/>
<gene>
    <name evidence="1" type="primary">rpsC</name>
    <name type="ordered locus">BSU01220</name>
</gene>
<dbReference type="EMBL" id="U43929">
    <property type="protein sequence ID" value="AAC45962.1"/>
    <property type="molecule type" value="Genomic_DNA"/>
</dbReference>
<dbReference type="EMBL" id="D50302">
    <property type="protein sequence ID" value="BAA08837.1"/>
    <property type="molecule type" value="Genomic_DNA"/>
</dbReference>
<dbReference type="EMBL" id="D50303">
    <property type="status" value="NOT_ANNOTATED_CDS"/>
    <property type="molecule type" value="Genomic_DNA"/>
</dbReference>
<dbReference type="EMBL" id="AL009126">
    <property type="protein sequence ID" value="CAB11898.2"/>
    <property type="molecule type" value="Genomic_DNA"/>
</dbReference>
<dbReference type="PIR" id="B69699">
    <property type="entry name" value="B69699"/>
</dbReference>
<dbReference type="RefSeq" id="NP_388003.2">
    <property type="nucleotide sequence ID" value="NC_000964.3"/>
</dbReference>
<dbReference type="RefSeq" id="WP_003235068.1">
    <property type="nucleotide sequence ID" value="NZ_OZ025638.1"/>
</dbReference>
<dbReference type="PDB" id="3J9W">
    <property type="method" value="EM"/>
    <property type="resolution" value="3.90 A"/>
    <property type="chains" value="AC=1-218"/>
</dbReference>
<dbReference type="PDB" id="5NJT">
    <property type="method" value="EM"/>
    <property type="resolution" value="3.80 A"/>
    <property type="chains" value="C=2-211"/>
</dbReference>
<dbReference type="PDB" id="6HA1">
    <property type="method" value="EM"/>
    <property type="resolution" value="3.10 A"/>
    <property type="chains" value="c=1-218"/>
</dbReference>
<dbReference type="PDB" id="6HA8">
    <property type="method" value="EM"/>
    <property type="resolution" value="3.50 A"/>
    <property type="chains" value="c=1-218"/>
</dbReference>
<dbReference type="PDB" id="6HTQ">
    <property type="method" value="EM"/>
    <property type="resolution" value="4.50 A"/>
    <property type="chains" value="c=2-207"/>
</dbReference>
<dbReference type="PDB" id="7O5B">
    <property type="method" value="EM"/>
    <property type="resolution" value="3.33 A"/>
    <property type="chains" value="C=1-218"/>
</dbReference>
<dbReference type="PDB" id="7QGU">
    <property type="method" value="EM"/>
    <property type="resolution" value="4.75 A"/>
    <property type="chains" value="h=1-218"/>
</dbReference>
<dbReference type="PDB" id="7QH4">
    <property type="method" value="EM"/>
    <property type="resolution" value="5.45 A"/>
    <property type="chains" value="g=1-218"/>
</dbReference>
<dbReference type="PDB" id="7QV1">
    <property type="method" value="EM"/>
    <property type="resolution" value="3.50 A"/>
    <property type="chains" value="c=1-218"/>
</dbReference>
<dbReference type="PDB" id="7QV2">
    <property type="method" value="EM"/>
    <property type="resolution" value="3.50 A"/>
    <property type="chains" value="c=1-218"/>
</dbReference>
<dbReference type="PDB" id="7QV3">
    <property type="method" value="EM"/>
    <property type="resolution" value="5.14 A"/>
    <property type="chains" value="c=1-218"/>
</dbReference>
<dbReference type="PDB" id="8BUU">
    <property type="method" value="EM"/>
    <property type="resolution" value="2.90 A"/>
    <property type="chains" value="c=1-218"/>
</dbReference>
<dbReference type="PDB" id="8CDU">
    <property type="method" value="EM"/>
    <property type="resolution" value="3.10 A"/>
    <property type="chains" value="E=1-218"/>
</dbReference>
<dbReference type="PDB" id="8CEC">
    <property type="method" value="EM"/>
    <property type="resolution" value="3.57 A"/>
    <property type="chains" value="H=1-218"/>
</dbReference>
<dbReference type="PDB" id="8CED">
    <property type="method" value="EM"/>
    <property type="resolution" value="4.15 A"/>
    <property type="chains" value="E=1-218"/>
</dbReference>
<dbReference type="PDB" id="8CEE">
    <property type="method" value="EM"/>
    <property type="resolution" value="3.70 A"/>
    <property type="chains" value="E=1-218"/>
</dbReference>
<dbReference type="PDB" id="8QCQ">
    <property type="method" value="EM"/>
    <property type="resolution" value="2.30 A"/>
    <property type="chains" value="c=1-206"/>
</dbReference>
<dbReference type="PDB" id="8QPP">
    <property type="method" value="EM"/>
    <property type="resolution" value="3.40 A"/>
    <property type="chains" value="C=1-218"/>
</dbReference>
<dbReference type="PDB" id="8R55">
    <property type="method" value="EM"/>
    <property type="resolution" value="3.57 A"/>
    <property type="chains" value="C=1-218"/>
</dbReference>
<dbReference type="PDBsum" id="3J9W"/>
<dbReference type="PDBsum" id="5NJT"/>
<dbReference type="PDBsum" id="6HA1"/>
<dbReference type="PDBsum" id="6HA8"/>
<dbReference type="PDBsum" id="6HTQ"/>
<dbReference type="PDBsum" id="7O5B"/>
<dbReference type="PDBsum" id="7QGU"/>
<dbReference type="PDBsum" id="7QH4"/>
<dbReference type="PDBsum" id="7QV1"/>
<dbReference type="PDBsum" id="7QV2"/>
<dbReference type="PDBsum" id="7QV3"/>
<dbReference type="PDBsum" id="8BUU"/>
<dbReference type="PDBsum" id="8CDU"/>
<dbReference type="PDBsum" id="8CEC"/>
<dbReference type="PDBsum" id="8CED"/>
<dbReference type="PDBsum" id="8CEE"/>
<dbReference type="PDBsum" id="8QCQ"/>
<dbReference type="PDBsum" id="8QPP"/>
<dbReference type="PDBsum" id="8R55"/>
<dbReference type="EMDB" id="EMD-0176"/>
<dbReference type="EMDB" id="EMD-0177"/>
<dbReference type="EMDB" id="EMD-0270"/>
<dbReference type="EMDB" id="EMD-12734"/>
<dbReference type="EMDB" id="EMD-14157"/>
<dbReference type="EMDB" id="EMD-14158"/>
<dbReference type="EMDB" id="EMD-14159"/>
<dbReference type="EMDB" id="EMD-16246"/>
<dbReference type="EMDB" id="EMD-16595"/>
<dbReference type="EMDB" id="EMD-16605"/>
<dbReference type="EMDB" id="EMD-16606"/>
<dbReference type="EMDB" id="EMD-16607"/>
<dbReference type="EMDB" id="EMD-18332"/>
<dbReference type="EMDB" id="EMD-3656"/>
<dbReference type="SMR" id="P21465"/>
<dbReference type="FunCoup" id="P21465">
    <property type="interactions" value="690"/>
</dbReference>
<dbReference type="IntAct" id="P21465">
    <property type="interactions" value="4"/>
</dbReference>
<dbReference type="MINT" id="P21465"/>
<dbReference type="STRING" id="224308.BSU01220"/>
<dbReference type="jPOST" id="P21465"/>
<dbReference type="PaxDb" id="224308-BSU01220"/>
<dbReference type="EnsemblBacteria" id="CAB11898">
    <property type="protein sequence ID" value="CAB11898"/>
    <property type="gene ID" value="BSU_01220"/>
</dbReference>
<dbReference type="GeneID" id="936808"/>
<dbReference type="KEGG" id="bsu:BSU01220"/>
<dbReference type="PATRIC" id="fig|224308.179.peg.125"/>
<dbReference type="eggNOG" id="COG0092">
    <property type="taxonomic scope" value="Bacteria"/>
</dbReference>
<dbReference type="InParanoid" id="P21465"/>
<dbReference type="OrthoDB" id="9806396at2"/>
<dbReference type="PhylomeDB" id="P21465"/>
<dbReference type="BioCyc" id="BSUB:BSU01220-MONOMER"/>
<dbReference type="Proteomes" id="UP000001570">
    <property type="component" value="Chromosome"/>
</dbReference>
<dbReference type="GO" id="GO:0022627">
    <property type="term" value="C:cytosolic small ribosomal subunit"/>
    <property type="evidence" value="ECO:0000318"/>
    <property type="project" value="GO_Central"/>
</dbReference>
<dbReference type="GO" id="GO:0003729">
    <property type="term" value="F:mRNA binding"/>
    <property type="evidence" value="ECO:0007669"/>
    <property type="project" value="UniProtKB-UniRule"/>
</dbReference>
<dbReference type="GO" id="GO:0019843">
    <property type="term" value="F:rRNA binding"/>
    <property type="evidence" value="ECO:0007669"/>
    <property type="project" value="UniProtKB-UniRule"/>
</dbReference>
<dbReference type="GO" id="GO:0003735">
    <property type="term" value="F:structural constituent of ribosome"/>
    <property type="evidence" value="ECO:0000318"/>
    <property type="project" value="GO_Central"/>
</dbReference>
<dbReference type="GO" id="GO:0006412">
    <property type="term" value="P:translation"/>
    <property type="evidence" value="ECO:0007669"/>
    <property type="project" value="UniProtKB-UniRule"/>
</dbReference>
<dbReference type="CDD" id="cd02412">
    <property type="entry name" value="KH-II_30S_S3"/>
    <property type="match status" value="1"/>
</dbReference>
<dbReference type="FunFam" id="3.30.1140.32:FF:000001">
    <property type="entry name" value="30S ribosomal protein S3"/>
    <property type="match status" value="1"/>
</dbReference>
<dbReference type="FunFam" id="3.30.300.20:FF:000001">
    <property type="entry name" value="30S ribosomal protein S3"/>
    <property type="match status" value="1"/>
</dbReference>
<dbReference type="Gene3D" id="3.30.300.20">
    <property type="match status" value="1"/>
</dbReference>
<dbReference type="Gene3D" id="3.30.1140.32">
    <property type="entry name" value="Ribosomal protein S3, C-terminal domain"/>
    <property type="match status" value="1"/>
</dbReference>
<dbReference type="HAMAP" id="MF_01309_B">
    <property type="entry name" value="Ribosomal_uS3_B"/>
    <property type="match status" value="1"/>
</dbReference>
<dbReference type="InterPro" id="IPR004087">
    <property type="entry name" value="KH_dom"/>
</dbReference>
<dbReference type="InterPro" id="IPR015946">
    <property type="entry name" value="KH_dom-like_a/b"/>
</dbReference>
<dbReference type="InterPro" id="IPR004044">
    <property type="entry name" value="KH_dom_type_2"/>
</dbReference>
<dbReference type="InterPro" id="IPR009019">
    <property type="entry name" value="KH_sf_prok-type"/>
</dbReference>
<dbReference type="InterPro" id="IPR036419">
    <property type="entry name" value="Ribosomal_S3_C_sf"/>
</dbReference>
<dbReference type="InterPro" id="IPR005704">
    <property type="entry name" value="Ribosomal_uS3_bac-typ"/>
</dbReference>
<dbReference type="InterPro" id="IPR001351">
    <property type="entry name" value="Ribosomal_uS3_C"/>
</dbReference>
<dbReference type="InterPro" id="IPR018280">
    <property type="entry name" value="Ribosomal_uS3_CS"/>
</dbReference>
<dbReference type="NCBIfam" id="TIGR01009">
    <property type="entry name" value="rpsC_bact"/>
    <property type="match status" value="1"/>
</dbReference>
<dbReference type="PANTHER" id="PTHR11760">
    <property type="entry name" value="30S/40S RIBOSOMAL PROTEIN S3"/>
    <property type="match status" value="1"/>
</dbReference>
<dbReference type="PANTHER" id="PTHR11760:SF19">
    <property type="entry name" value="SMALL RIBOSOMAL SUBUNIT PROTEIN US3C"/>
    <property type="match status" value="1"/>
</dbReference>
<dbReference type="Pfam" id="PF07650">
    <property type="entry name" value="KH_2"/>
    <property type="match status" value="1"/>
</dbReference>
<dbReference type="Pfam" id="PF00189">
    <property type="entry name" value="Ribosomal_S3_C"/>
    <property type="match status" value="1"/>
</dbReference>
<dbReference type="SMART" id="SM00322">
    <property type="entry name" value="KH"/>
    <property type="match status" value="1"/>
</dbReference>
<dbReference type="SUPFAM" id="SSF54814">
    <property type="entry name" value="Prokaryotic type KH domain (KH-domain type II)"/>
    <property type="match status" value="1"/>
</dbReference>
<dbReference type="SUPFAM" id="SSF54821">
    <property type="entry name" value="Ribosomal protein S3 C-terminal domain"/>
    <property type="match status" value="1"/>
</dbReference>
<dbReference type="PROSITE" id="PS50823">
    <property type="entry name" value="KH_TYPE_2"/>
    <property type="match status" value="1"/>
</dbReference>
<dbReference type="PROSITE" id="PS00548">
    <property type="entry name" value="RIBOSOMAL_S3"/>
    <property type="match status" value="1"/>
</dbReference>
<keyword id="KW-0002">3D-structure</keyword>
<keyword id="KW-0903">Direct protein sequencing</keyword>
<keyword id="KW-1185">Reference proteome</keyword>
<keyword id="KW-0687">Ribonucleoprotein</keyword>
<keyword id="KW-0689">Ribosomal protein</keyword>
<keyword id="KW-0694">RNA-binding</keyword>
<keyword id="KW-0699">rRNA-binding</keyword>
<reference key="1">
    <citation type="journal article" date="1997" name="J. Bacteriol.">
        <title>Analysis of the Bacillus subtilis S10 ribosomal protein gene cluster identifies two promoters that may be responsible for transcription of the entire 15-kilobase S10-spc-alpha cluster.</title>
        <authorList>
            <person name="Li X."/>
            <person name="Lindahl L."/>
            <person name="Sha Y."/>
            <person name="Zengel J.M."/>
        </authorList>
    </citation>
    <scope>NUCLEOTIDE SEQUENCE [GENOMIC DNA]</scope>
    <source>
        <strain>SG38</strain>
    </source>
</reference>
<reference key="2">
    <citation type="journal article" date="1996" name="Microbiology">
        <title>Sequence analysis of a 50 kb region between spo0H and rrnH on the Bacillus subtilis chromosome.</title>
        <authorList>
            <person name="Yasumoto K."/>
            <person name="Liu H."/>
            <person name="Jeong S.M."/>
            <person name="Ohashi Y."/>
            <person name="Kakinuma S."/>
            <person name="Tanaka K."/>
            <person name="Kawamura F."/>
            <person name="Yoshikawa H."/>
            <person name="Takahashi H."/>
        </authorList>
    </citation>
    <scope>NUCLEOTIDE SEQUENCE [GENOMIC DNA]</scope>
    <source>
        <strain>168</strain>
    </source>
</reference>
<reference key="3">
    <citation type="journal article" date="1997" name="Nature">
        <title>The complete genome sequence of the Gram-positive bacterium Bacillus subtilis.</title>
        <authorList>
            <person name="Kunst F."/>
            <person name="Ogasawara N."/>
            <person name="Moszer I."/>
            <person name="Albertini A.M."/>
            <person name="Alloni G."/>
            <person name="Azevedo V."/>
            <person name="Bertero M.G."/>
            <person name="Bessieres P."/>
            <person name="Bolotin A."/>
            <person name="Borchert S."/>
            <person name="Borriss R."/>
            <person name="Boursier L."/>
            <person name="Brans A."/>
            <person name="Braun M."/>
            <person name="Brignell S.C."/>
            <person name="Bron S."/>
            <person name="Brouillet S."/>
            <person name="Bruschi C.V."/>
            <person name="Caldwell B."/>
            <person name="Capuano V."/>
            <person name="Carter N.M."/>
            <person name="Choi S.-K."/>
            <person name="Codani J.-J."/>
            <person name="Connerton I.F."/>
            <person name="Cummings N.J."/>
            <person name="Daniel R.A."/>
            <person name="Denizot F."/>
            <person name="Devine K.M."/>
            <person name="Duesterhoeft A."/>
            <person name="Ehrlich S.D."/>
            <person name="Emmerson P.T."/>
            <person name="Entian K.-D."/>
            <person name="Errington J."/>
            <person name="Fabret C."/>
            <person name="Ferrari E."/>
            <person name="Foulger D."/>
            <person name="Fritz C."/>
            <person name="Fujita M."/>
            <person name="Fujita Y."/>
            <person name="Fuma S."/>
            <person name="Galizzi A."/>
            <person name="Galleron N."/>
            <person name="Ghim S.-Y."/>
            <person name="Glaser P."/>
            <person name="Goffeau A."/>
            <person name="Golightly E.J."/>
            <person name="Grandi G."/>
            <person name="Guiseppi G."/>
            <person name="Guy B.J."/>
            <person name="Haga K."/>
            <person name="Haiech J."/>
            <person name="Harwood C.R."/>
            <person name="Henaut A."/>
            <person name="Hilbert H."/>
            <person name="Holsappel S."/>
            <person name="Hosono S."/>
            <person name="Hullo M.-F."/>
            <person name="Itaya M."/>
            <person name="Jones L.-M."/>
            <person name="Joris B."/>
            <person name="Karamata D."/>
            <person name="Kasahara Y."/>
            <person name="Klaerr-Blanchard M."/>
            <person name="Klein C."/>
            <person name="Kobayashi Y."/>
            <person name="Koetter P."/>
            <person name="Koningstein G."/>
            <person name="Krogh S."/>
            <person name="Kumano M."/>
            <person name="Kurita K."/>
            <person name="Lapidus A."/>
            <person name="Lardinois S."/>
            <person name="Lauber J."/>
            <person name="Lazarevic V."/>
            <person name="Lee S.-M."/>
            <person name="Levine A."/>
            <person name="Liu H."/>
            <person name="Masuda S."/>
            <person name="Mauel C."/>
            <person name="Medigue C."/>
            <person name="Medina N."/>
            <person name="Mellado R.P."/>
            <person name="Mizuno M."/>
            <person name="Moestl D."/>
            <person name="Nakai S."/>
            <person name="Noback M."/>
            <person name="Noone D."/>
            <person name="O'Reilly M."/>
            <person name="Ogawa K."/>
            <person name="Ogiwara A."/>
            <person name="Oudega B."/>
            <person name="Park S.-H."/>
            <person name="Parro V."/>
            <person name="Pohl T.M."/>
            <person name="Portetelle D."/>
            <person name="Porwollik S."/>
            <person name="Prescott A.M."/>
            <person name="Presecan E."/>
            <person name="Pujic P."/>
            <person name="Purnelle B."/>
            <person name="Rapoport G."/>
            <person name="Rey M."/>
            <person name="Reynolds S."/>
            <person name="Rieger M."/>
            <person name="Rivolta C."/>
            <person name="Rocha E."/>
            <person name="Roche B."/>
            <person name="Rose M."/>
            <person name="Sadaie Y."/>
            <person name="Sato T."/>
            <person name="Scanlan E."/>
            <person name="Schleich S."/>
            <person name="Schroeter R."/>
            <person name="Scoffone F."/>
            <person name="Sekiguchi J."/>
            <person name="Sekowska A."/>
            <person name="Seror S.J."/>
            <person name="Serror P."/>
            <person name="Shin B.-S."/>
            <person name="Soldo B."/>
            <person name="Sorokin A."/>
            <person name="Tacconi E."/>
            <person name="Takagi T."/>
            <person name="Takahashi H."/>
            <person name="Takemaru K."/>
            <person name="Takeuchi M."/>
            <person name="Tamakoshi A."/>
            <person name="Tanaka T."/>
            <person name="Terpstra P."/>
            <person name="Tognoni A."/>
            <person name="Tosato V."/>
            <person name="Uchiyama S."/>
            <person name="Vandenbol M."/>
            <person name="Vannier F."/>
            <person name="Vassarotti A."/>
            <person name="Viari A."/>
            <person name="Wambutt R."/>
            <person name="Wedler E."/>
            <person name="Wedler H."/>
            <person name="Weitzenegger T."/>
            <person name="Winters P."/>
            <person name="Wipat A."/>
            <person name="Yamamoto H."/>
            <person name="Yamane K."/>
            <person name="Yasumoto K."/>
            <person name="Yata K."/>
            <person name="Yoshida K."/>
            <person name="Yoshikawa H.-F."/>
            <person name="Zumstein E."/>
            <person name="Yoshikawa H."/>
            <person name="Danchin A."/>
        </authorList>
    </citation>
    <scope>NUCLEOTIDE SEQUENCE [LARGE SCALE GENOMIC DNA]</scope>
    <source>
        <strain>168</strain>
    </source>
</reference>
<reference key="4">
    <citation type="journal article" date="2009" name="Microbiology">
        <title>From a consortium sequence to a unified sequence: the Bacillus subtilis 168 reference genome a decade later.</title>
        <authorList>
            <person name="Barbe V."/>
            <person name="Cruveiller S."/>
            <person name="Kunst F."/>
            <person name="Lenoble P."/>
            <person name="Meurice G."/>
            <person name="Sekowska A."/>
            <person name="Vallenet D."/>
            <person name="Wang T."/>
            <person name="Moszer I."/>
            <person name="Medigue C."/>
            <person name="Danchin A."/>
        </authorList>
    </citation>
    <scope>SEQUENCE REVISION TO 164</scope>
</reference>
<reference key="5">
    <citation type="journal article" date="1982" name="Mol. Gen. Genet.">
        <title>Purification and characterization of 30S ribosomal proteins from Bacillus subtilis: correlation to Escherichia coli 30S proteins.</title>
        <authorList>
            <person name="Higo K."/>
            <person name="Otaka E."/>
            <person name="Osawa S."/>
        </authorList>
    </citation>
    <scope>PROTEIN SEQUENCE OF 2-18</scope>
</reference>
<reference evidence="5 6" key="6">
    <citation type="journal article" date="2018" name="Proc. Natl. Acad. Sci. U.S.A.">
        <title>Structural basis for antibiotic resistance mediated by the Bacillus subtilis ABCF ATPase VmlR.</title>
        <authorList>
            <person name="Crowe-McAuliffe C."/>
            <person name="Graf M."/>
            <person name="Huter P."/>
            <person name="Takada H."/>
            <person name="Abdelshahid M."/>
            <person name="Novacek J."/>
            <person name="Murina V."/>
            <person name="Atkinson G.C."/>
            <person name="Hauryliuk V."/>
            <person name="Wilson D.N."/>
        </authorList>
    </citation>
    <scope>STRUCTURE BY ELECTRON MICROSCOPY (3.10 ANGSTROMS) OF 1-218 WITH AND WITHOUT VIRGINIAMYCIN M</scope>
    <scope>SUBUNIT</scope>
</reference>
<evidence type="ECO:0000255" key="1">
    <source>
        <dbReference type="HAMAP-Rule" id="MF_01309"/>
    </source>
</evidence>
<evidence type="ECO:0000269" key="2">
    <source>
    </source>
</evidence>
<evidence type="ECO:0000269" key="3">
    <source>
    </source>
</evidence>
<evidence type="ECO:0000305" key="4"/>
<evidence type="ECO:0007744" key="5">
    <source>
        <dbReference type="PDB" id="6HA1"/>
    </source>
</evidence>
<evidence type="ECO:0007744" key="6">
    <source>
        <dbReference type="PDB" id="6HA8"/>
    </source>
</evidence>
<evidence type="ECO:0007829" key="7">
    <source>
        <dbReference type="PDB" id="8CDU"/>
    </source>
</evidence>
<feature type="initiator methionine" description="Removed" evidence="3">
    <location>
        <position position="1"/>
    </location>
</feature>
<feature type="chain" id="PRO_0000130073" description="Small ribosomal subunit protein uS3">
    <location>
        <begin position="2"/>
        <end position="218"/>
    </location>
</feature>
<feature type="domain" description="KH type-2" evidence="1">
    <location>
        <begin position="38"/>
        <end position="106"/>
    </location>
</feature>
<feature type="sequence conflict" description="In Ref. 5; AA sequence." evidence="4" ref="5">
    <original>K</original>
    <variation>H</variation>
    <location>
        <position position="4"/>
    </location>
</feature>
<feature type="sequence conflict" description="In Ref. 2; BAA08837." evidence="4" ref="2">
    <original>S</original>
    <variation>P</variation>
    <location>
        <position position="164"/>
    </location>
</feature>
<feature type="helix" evidence="7">
    <location>
        <begin position="7"/>
        <end position="11"/>
    </location>
</feature>
<feature type="turn" evidence="7">
    <location>
        <begin position="13"/>
        <end position="15"/>
    </location>
</feature>
<feature type="strand" evidence="7">
    <location>
        <begin position="19"/>
        <end position="21"/>
    </location>
</feature>
<feature type="helix" evidence="7">
    <location>
        <begin position="28"/>
        <end position="45"/>
    </location>
</feature>
<feature type="turn" evidence="7">
    <location>
        <begin position="46"/>
        <end position="48"/>
    </location>
</feature>
<feature type="strand" evidence="7">
    <location>
        <begin position="51"/>
        <end position="57"/>
    </location>
</feature>
<feature type="strand" evidence="7">
    <location>
        <begin position="64"/>
        <end position="70"/>
    </location>
</feature>
<feature type="helix" evidence="7">
    <location>
        <begin position="72"/>
        <end position="76"/>
    </location>
</feature>
<feature type="helix" evidence="7">
    <location>
        <begin position="81"/>
        <end position="94"/>
    </location>
</feature>
<feature type="turn" evidence="7">
    <location>
        <begin position="108"/>
        <end position="110"/>
    </location>
</feature>
<feature type="helix" evidence="7">
    <location>
        <begin position="112"/>
        <end position="124"/>
    </location>
</feature>
<feature type="helix" evidence="7">
    <location>
        <begin position="129"/>
        <end position="143"/>
    </location>
</feature>
<feature type="strand" evidence="7">
    <location>
        <begin position="146"/>
        <end position="152"/>
    </location>
</feature>
<feature type="strand" evidence="7">
    <location>
        <begin position="165"/>
        <end position="170"/>
    </location>
</feature>
<feature type="strand" evidence="7">
    <location>
        <begin position="179"/>
        <end position="189"/>
    </location>
</feature>
<feature type="strand" evidence="7">
    <location>
        <begin position="191"/>
        <end position="205"/>
    </location>
</feature>
<name>RS3_BACSU</name>